<feature type="chain" id="PRO_0000152738" description="Lysine--tRNA ligase">
    <location>
        <begin position="1"/>
        <end position="551"/>
    </location>
</feature>
<feature type="short sequence motif" description="'HIGH' region">
    <location>
        <begin position="54"/>
        <end position="62"/>
    </location>
</feature>
<feature type="short sequence motif" description="'KMSKS' region">
    <location>
        <begin position="303"/>
        <end position="307"/>
    </location>
</feature>
<feature type="binding site" evidence="1">
    <location>
        <position position="306"/>
    </location>
    <ligand>
        <name>ATP</name>
        <dbReference type="ChEBI" id="CHEBI:30616"/>
    </ligand>
</feature>
<evidence type="ECO:0000255" key="1">
    <source>
        <dbReference type="HAMAP-Rule" id="MF_00177"/>
    </source>
</evidence>
<protein>
    <recommendedName>
        <fullName evidence="1">Lysine--tRNA ligase</fullName>
        <ecNumber evidence="1">6.1.1.6</ecNumber>
    </recommendedName>
    <alternativeName>
        <fullName evidence="1">Lysyl-tRNA synthetase</fullName>
        <shortName evidence="1">LysRS</shortName>
    </alternativeName>
</protein>
<proteinExistence type="inferred from homology"/>
<name>SYK_BRUME</name>
<reference key="1">
    <citation type="journal article" date="2002" name="Proc. Natl. Acad. Sci. U.S.A.">
        <title>The genome sequence of the facultative intracellular pathogen Brucella melitensis.</title>
        <authorList>
            <person name="DelVecchio V.G."/>
            <person name="Kapatral V."/>
            <person name="Redkar R.J."/>
            <person name="Patra G."/>
            <person name="Mujer C."/>
            <person name="Los T."/>
            <person name="Ivanova N."/>
            <person name="Anderson I."/>
            <person name="Bhattacharyya A."/>
            <person name="Lykidis A."/>
            <person name="Reznik G."/>
            <person name="Jablonski L."/>
            <person name="Larsen N."/>
            <person name="D'Souza M."/>
            <person name="Bernal A."/>
            <person name="Mazur M."/>
            <person name="Goltsman E."/>
            <person name="Selkov E."/>
            <person name="Elzer P.H."/>
            <person name="Hagius S."/>
            <person name="O'Callaghan D."/>
            <person name="Letesson J.-J."/>
            <person name="Haselkorn R."/>
            <person name="Kyrpides N.C."/>
            <person name="Overbeek R."/>
        </authorList>
    </citation>
    <scope>NUCLEOTIDE SEQUENCE [LARGE SCALE GENOMIC DNA]</scope>
    <source>
        <strain>ATCC 23456 / CCUG 17765 / NCTC 10094 / 16M</strain>
    </source>
</reference>
<comment type="catalytic activity">
    <reaction evidence="1">
        <text>tRNA(Lys) + L-lysine + ATP = L-lysyl-tRNA(Lys) + AMP + diphosphate</text>
        <dbReference type="Rhea" id="RHEA:20792"/>
        <dbReference type="Rhea" id="RHEA-COMP:9696"/>
        <dbReference type="Rhea" id="RHEA-COMP:9697"/>
        <dbReference type="ChEBI" id="CHEBI:30616"/>
        <dbReference type="ChEBI" id="CHEBI:32551"/>
        <dbReference type="ChEBI" id="CHEBI:33019"/>
        <dbReference type="ChEBI" id="CHEBI:78442"/>
        <dbReference type="ChEBI" id="CHEBI:78529"/>
        <dbReference type="ChEBI" id="CHEBI:456215"/>
        <dbReference type="EC" id="6.1.1.6"/>
    </reaction>
</comment>
<comment type="subcellular location">
    <subcellularLocation>
        <location evidence="1">Cytoplasm</location>
    </subcellularLocation>
</comment>
<comment type="similarity">
    <text evidence="1">Belongs to the class-I aminoacyl-tRNA synthetase family.</text>
</comment>
<keyword id="KW-0030">Aminoacyl-tRNA synthetase</keyword>
<keyword id="KW-0067">ATP-binding</keyword>
<keyword id="KW-0963">Cytoplasm</keyword>
<keyword id="KW-0436">Ligase</keyword>
<keyword id="KW-0547">Nucleotide-binding</keyword>
<keyword id="KW-0648">Protein biosynthesis</keyword>
<organism>
    <name type="scientific">Brucella melitensis biotype 1 (strain ATCC 23456 / CCUG 17765 / NCTC 10094 / 16M)</name>
    <dbReference type="NCBI Taxonomy" id="224914"/>
    <lineage>
        <taxon>Bacteria</taxon>
        <taxon>Pseudomonadati</taxon>
        <taxon>Pseudomonadota</taxon>
        <taxon>Alphaproteobacteria</taxon>
        <taxon>Hyphomicrobiales</taxon>
        <taxon>Brucellaceae</taxon>
        <taxon>Brucella/Ochrobactrum group</taxon>
        <taxon>Brucella</taxon>
    </lineage>
</organism>
<sequence length="551" mass="61699">MTSHRLPEITLTPELTAAAAEAKAWPFEEARKILKRYAKTGLPETVIFETGYGPSGLPHIGTFGEVARTSMVRHAFRILTQDKVKTRLICFSDDLDGMRKVPDNVPDRAALEPYLQMPLSSVPNPFGGDYKSFAEHNNAMLCRFLDTFGFDYEFASATEYYRSGRFDTVLLKAVERYDDIMKVMLPTLGEERQATYSPFLPISPKSGRVLYVPMKKVDAKAGTITFDDEDGEETTLSVTGGKVKLQWKPDFGMRWAALGVDFEMFGKDHQTNAGIYDRICEILGGRAPEHFVYELFLDQLGQKISKSKGNGISIDEWLAYAPTESLTLYNFQKPKTAKKLYFDVIPKTVDEYFTYLSAYARQEWKDRLNNPVWHIHYGNPPKADLPVTFALMLNLVSASNAESPAVLWGFISRHVPGVTPENNPELDALVGYAIRYFNDFVKPTKKFRAPDDVERAALEALDAKLGELPAGTDGNVIQNAILDVARAIERYQDHTKKSPEGGPGVSVSFFQMLYEVLIGQERGPRFGSFVALYGIDETRALIKKALAGELA</sequence>
<dbReference type="EC" id="6.1.1.6" evidence="1"/>
<dbReference type="EMBL" id="AE008918">
    <property type="protein sequence ID" value="AAL53742.1"/>
    <property type="molecule type" value="Genomic_DNA"/>
</dbReference>
<dbReference type="PIR" id="AC3572">
    <property type="entry name" value="AC3572"/>
</dbReference>
<dbReference type="RefSeq" id="WP_004682127.1">
    <property type="nucleotide sequence ID" value="NC_003318.1"/>
</dbReference>
<dbReference type="SMR" id="Q8YCM8"/>
<dbReference type="GeneID" id="29595932"/>
<dbReference type="KEGG" id="bme:BMEII0500"/>
<dbReference type="KEGG" id="bmel:DK63_2743"/>
<dbReference type="PATRIC" id="fig|224914.52.peg.2872"/>
<dbReference type="eggNOG" id="COG1384">
    <property type="taxonomic scope" value="Bacteria"/>
</dbReference>
<dbReference type="PhylomeDB" id="Q8YCM8"/>
<dbReference type="Proteomes" id="UP000000419">
    <property type="component" value="Chromosome II"/>
</dbReference>
<dbReference type="GO" id="GO:0005737">
    <property type="term" value="C:cytoplasm"/>
    <property type="evidence" value="ECO:0007669"/>
    <property type="project" value="UniProtKB-SubCell"/>
</dbReference>
<dbReference type="GO" id="GO:0005524">
    <property type="term" value="F:ATP binding"/>
    <property type="evidence" value="ECO:0007669"/>
    <property type="project" value="UniProtKB-UniRule"/>
</dbReference>
<dbReference type="GO" id="GO:0004824">
    <property type="term" value="F:lysine-tRNA ligase activity"/>
    <property type="evidence" value="ECO:0007669"/>
    <property type="project" value="UniProtKB-UniRule"/>
</dbReference>
<dbReference type="GO" id="GO:0000049">
    <property type="term" value="F:tRNA binding"/>
    <property type="evidence" value="ECO:0007669"/>
    <property type="project" value="InterPro"/>
</dbReference>
<dbReference type="GO" id="GO:0006430">
    <property type="term" value="P:lysyl-tRNA aminoacylation"/>
    <property type="evidence" value="ECO:0007669"/>
    <property type="project" value="UniProtKB-UniRule"/>
</dbReference>
<dbReference type="Gene3D" id="1.10.10.350">
    <property type="match status" value="1"/>
</dbReference>
<dbReference type="Gene3D" id="3.40.50.620">
    <property type="entry name" value="HUPs"/>
    <property type="match status" value="1"/>
</dbReference>
<dbReference type="HAMAP" id="MF_00177">
    <property type="entry name" value="Lys_tRNA_synth_class1"/>
    <property type="match status" value="1"/>
</dbReference>
<dbReference type="InterPro" id="IPR020751">
    <property type="entry name" value="aa-tRNA-synth_I_codon-bd_sub2"/>
</dbReference>
<dbReference type="InterPro" id="IPR001412">
    <property type="entry name" value="aa-tRNA-synth_I_CS"/>
</dbReference>
<dbReference type="InterPro" id="IPR008925">
    <property type="entry name" value="aa_tRNA-synth_I_cd-bd_sf"/>
</dbReference>
<dbReference type="InterPro" id="IPR002904">
    <property type="entry name" value="Lys-tRNA-ligase"/>
</dbReference>
<dbReference type="InterPro" id="IPR014729">
    <property type="entry name" value="Rossmann-like_a/b/a_fold"/>
</dbReference>
<dbReference type="NCBIfam" id="TIGR00467">
    <property type="entry name" value="lysS_arch"/>
    <property type="match status" value="1"/>
</dbReference>
<dbReference type="NCBIfam" id="NF001968">
    <property type="entry name" value="PRK00750.1-2"/>
    <property type="match status" value="1"/>
</dbReference>
<dbReference type="PANTHER" id="PTHR37940">
    <property type="entry name" value="LYSINE--TRNA LIGASE"/>
    <property type="match status" value="1"/>
</dbReference>
<dbReference type="PANTHER" id="PTHR37940:SF1">
    <property type="entry name" value="LYSINE--TRNA LIGASE"/>
    <property type="match status" value="1"/>
</dbReference>
<dbReference type="Pfam" id="PF01921">
    <property type="entry name" value="tRNA-synt_1f"/>
    <property type="match status" value="1"/>
</dbReference>
<dbReference type="SUPFAM" id="SSF48163">
    <property type="entry name" value="An anticodon-binding domain of class I aminoacyl-tRNA synthetases"/>
    <property type="match status" value="1"/>
</dbReference>
<dbReference type="SUPFAM" id="SSF52374">
    <property type="entry name" value="Nucleotidylyl transferase"/>
    <property type="match status" value="1"/>
</dbReference>
<dbReference type="PROSITE" id="PS00178">
    <property type="entry name" value="AA_TRNA_LIGASE_I"/>
    <property type="match status" value="1"/>
</dbReference>
<gene>
    <name evidence="1" type="primary">lysS</name>
    <name type="ordered locus">BMEII0500</name>
</gene>
<accession>Q8YCM8</accession>